<comment type="function">
    <text evidence="1">O-methyltransferase that catalyzes the 2 O-methylation steps in the ubiquinone biosynthetic pathway.</text>
</comment>
<comment type="catalytic activity">
    <reaction evidence="1">
        <text>a 3-demethylubiquinol + S-adenosyl-L-methionine = a ubiquinol + S-adenosyl-L-homocysteine + H(+)</text>
        <dbReference type="Rhea" id="RHEA:44380"/>
        <dbReference type="Rhea" id="RHEA-COMP:9566"/>
        <dbReference type="Rhea" id="RHEA-COMP:10914"/>
        <dbReference type="ChEBI" id="CHEBI:15378"/>
        <dbReference type="ChEBI" id="CHEBI:17976"/>
        <dbReference type="ChEBI" id="CHEBI:57856"/>
        <dbReference type="ChEBI" id="CHEBI:59789"/>
        <dbReference type="ChEBI" id="CHEBI:84422"/>
        <dbReference type="EC" id="2.1.1.64"/>
    </reaction>
</comment>
<comment type="catalytic activity">
    <reaction evidence="1">
        <text>a 3-(all-trans-polyprenyl)benzene-1,2-diol + S-adenosyl-L-methionine = a 2-methoxy-6-(all-trans-polyprenyl)phenol + S-adenosyl-L-homocysteine + H(+)</text>
        <dbReference type="Rhea" id="RHEA:31411"/>
        <dbReference type="Rhea" id="RHEA-COMP:9550"/>
        <dbReference type="Rhea" id="RHEA-COMP:9551"/>
        <dbReference type="ChEBI" id="CHEBI:15378"/>
        <dbReference type="ChEBI" id="CHEBI:57856"/>
        <dbReference type="ChEBI" id="CHEBI:59789"/>
        <dbReference type="ChEBI" id="CHEBI:62729"/>
        <dbReference type="ChEBI" id="CHEBI:62731"/>
        <dbReference type="EC" id="2.1.1.222"/>
    </reaction>
</comment>
<comment type="pathway">
    <text evidence="1">Cofactor biosynthesis; ubiquinone biosynthesis.</text>
</comment>
<comment type="similarity">
    <text evidence="1">Belongs to the methyltransferase superfamily. UbiG/COQ3 family.</text>
</comment>
<evidence type="ECO:0000255" key="1">
    <source>
        <dbReference type="HAMAP-Rule" id="MF_00472"/>
    </source>
</evidence>
<protein>
    <recommendedName>
        <fullName evidence="1">Ubiquinone biosynthesis O-methyltransferase</fullName>
    </recommendedName>
    <alternativeName>
        <fullName evidence="1">2-polyprenyl-6-hydroxyphenol methylase</fullName>
        <ecNumber evidence="1">2.1.1.222</ecNumber>
    </alternativeName>
    <alternativeName>
        <fullName evidence="1">3-demethylubiquinone 3-O-methyltransferase</fullName>
        <ecNumber evidence="1">2.1.1.64</ecNumber>
    </alternativeName>
</protein>
<dbReference type="EC" id="2.1.1.222" evidence="1"/>
<dbReference type="EC" id="2.1.1.64" evidence="1"/>
<dbReference type="EMBL" id="CP001013">
    <property type="protein sequence ID" value="ACB33229.1"/>
    <property type="molecule type" value="Genomic_DNA"/>
</dbReference>
<dbReference type="RefSeq" id="WP_012345991.1">
    <property type="nucleotide sequence ID" value="NC_010524.1"/>
</dbReference>
<dbReference type="SMR" id="B1Y2L3"/>
<dbReference type="STRING" id="395495.Lcho_0957"/>
<dbReference type="KEGG" id="lch:Lcho_0957"/>
<dbReference type="eggNOG" id="COG2227">
    <property type="taxonomic scope" value="Bacteria"/>
</dbReference>
<dbReference type="HOGENOM" id="CLU_042432_5_0_4"/>
<dbReference type="OrthoDB" id="9801538at2"/>
<dbReference type="UniPathway" id="UPA00232"/>
<dbReference type="Proteomes" id="UP000001693">
    <property type="component" value="Chromosome"/>
</dbReference>
<dbReference type="GO" id="GO:0102208">
    <property type="term" value="F:2-polyprenyl-6-hydroxyphenol methylase activity"/>
    <property type="evidence" value="ECO:0007669"/>
    <property type="project" value="UniProtKB-EC"/>
</dbReference>
<dbReference type="GO" id="GO:0061542">
    <property type="term" value="F:3-demethylubiquinol 3-O-methyltransferase activity"/>
    <property type="evidence" value="ECO:0007669"/>
    <property type="project" value="UniProtKB-UniRule"/>
</dbReference>
<dbReference type="GO" id="GO:0010420">
    <property type="term" value="F:polyprenyldihydroxybenzoate methyltransferase activity"/>
    <property type="evidence" value="ECO:0007669"/>
    <property type="project" value="InterPro"/>
</dbReference>
<dbReference type="GO" id="GO:0032259">
    <property type="term" value="P:methylation"/>
    <property type="evidence" value="ECO:0007669"/>
    <property type="project" value="UniProtKB-KW"/>
</dbReference>
<dbReference type="CDD" id="cd02440">
    <property type="entry name" value="AdoMet_MTases"/>
    <property type="match status" value="1"/>
</dbReference>
<dbReference type="FunFam" id="3.40.50.150:FF:000028">
    <property type="entry name" value="Ubiquinone biosynthesis O-methyltransferase"/>
    <property type="match status" value="1"/>
</dbReference>
<dbReference type="Gene3D" id="3.40.50.150">
    <property type="entry name" value="Vaccinia Virus protein VP39"/>
    <property type="match status" value="1"/>
</dbReference>
<dbReference type="HAMAP" id="MF_00472">
    <property type="entry name" value="UbiG"/>
    <property type="match status" value="1"/>
</dbReference>
<dbReference type="InterPro" id="IPR029063">
    <property type="entry name" value="SAM-dependent_MTases_sf"/>
</dbReference>
<dbReference type="InterPro" id="IPR010233">
    <property type="entry name" value="UbiG_MeTrfase"/>
</dbReference>
<dbReference type="NCBIfam" id="TIGR01983">
    <property type="entry name" value="UbiG"/>
    <property type="match status" value="1"/>
</dbReference>
<dbReference type="PANTHER" id="PTHR43464">
    <property type="entry name" value="METHYLTRANSFERASE"/>
    <property type="match status" value="1"/>
</dbReference>
<dbReference type="PANTHER" id="PTHR43464:SF19">
    <property type="entry name" value="UBIQUINONE BIOSYNTHESIS O-METHYLTRANSFERASE, MITOCHONDRIAL"/>
    <property type="match status" value="1"/>
</dbReference>
<dbReference type="Pfam" id="PF13489">
    <property type="entry name" value="Methyltransf_23"/>
    <property type="match status" value="1"/>
</dbReference>
<dbReference type="SUPFAM" id="SSF53335">
    <property type="entry name" value="S-adenosyl-L-methionine-dependent methyltransferases"/>
    <property type="match status" value="1"/>
</dbReference>
<reference key="1">
    <citation type="submission" date="2008-03" db="EMBL/GenBank/DDBJ databases">
        <title>Complete sequence of Leptothrix cholodnii SP-6.</title>
        <authorList>
            <consortium name="US DOE Joint Genome Institute"/>
            <person name="Copeland A."/>
            <person name="Lucas S."/>
            <person name="Lapidus A."/>
            <person name="Glavina del Rio T."/>
            <person name="Dalin E."/>
            <person name="Tice H."/>
            <person name="Bruce D."/>
            <person name="Goodwin L."/>
            <person name="Pitluck S."/>
            <person name="Chertkov O."/>
            <person name="Brettin T."/>
            <person name="Detter J.C."/>
            <person name="Han C."/>
            <person name="Kuske C.R."/>
            <person name="Schmutz J."/>
            <person name="Larimer F."/>
            <person name="Land M."/>
            <person name="Hauser L."/>
            <person name="Kyrpides N."/>
            <person name="Lykidis A."/>
            <person name="Emerson D."/>
            <person name="Richardson P."/>
        </authorList>
    </citation>
    <scope>NUCLEOTIDE SEQUENCE [LARGE SCALE GENOMIC DNA]</scope>
    <source>
        <strain>ATCC 51168 / LMG 8142 / SP-6</strain>
    </source>
</reference>
<organism>
    <name type="scientific">Leptothrix cholodnii (strain ATCC 51168 / LMG 8142 / SP-6)</name>
    <name type="common">Leptothrix discophora (strain SP-6)</name>
    <dbReference type="NCBI Taxonomy" id="395495"/>
    <lineage>
        <taxon>Bacteria</taxon>
        <taxon>Pseudomonadati</taxon>
        <taxon>Pseudomonadota</taxon>
        <taxon>Betaproteobacteria</taxon>
        <taxon>Burkholderiales</taxon>
        <taxon>Sphaerotilaceae</taxon>
        <taxon>Leptothrix</taxon>
    </lineage>
</organism>
<name>UBIG_LEPCP</name>
<keyword id="KW-0489">Methyltransferase</keyword>
<keyword id="KW-1185">Reference proteome</keyword>
<keyword id="KW-0949">S-adenosyl-L-methionine</keyword>
<keyword id="KW-0808">Transferase</keyword>
<keyword id="KW-0831">Ubiquinone biosynthesis</keyword>
<accession>B1Y2L3</accession>
<feature type="chain" id="PRO_1000135506" description="Ubiquinone biosynthesis O-methyltransferase">
    <location>
        <begin position="1"/>
        <end position="235"/>
    </location>
</feature>
<feature type="binding site" evidence="1">
    <location>
        <position position="36"/>
    </location>
    <ligand>
        <name>S-adenosyl-L-methionine</name>
        <dbReference type="ChEBI" id="CHEBI:59789"/>
    </ligand>
</feature>
<feature type="binding site" evidence="1">
    <location>
        <position position="56"/>
    </location>
    <ligand>
        <name>S-adenosyl-L-methionine</name>
        <dbReference type="ChEBI" id="CHEBI:59789"/>
    </ligand>
</feature>
<feature type="binding site" evidence="1">
    <location>
        <position position="77"/>
    </location>
    <ligand>
        <name>S-adenosyl-L-methionine</name>
        <dbReference type="ChEBI" id="CHEBI:59789"/>
    </ligand>
</feature>
<feature type="binding site" evidence="1">
    <location>
        <position position="122"/>
    </location>
    <ligand>
        <name>S-adenosyl-L-methionine</name>
        <dbReference type="ChEBI" id="CHEBI:59789"/>
    </ligand>
</feature>
<gene>
    <name evidence="1" type="primary">ubiG</name>
    <name type="ordered locus">Lcho_0957</name>
</gene>
<sequence length="235" mass="26387">MQNADPKELAKFSELAHKWWDPESEFRPLHQINPLRLNWIEQTVGKLDGLKVLDVGCGGGILSEAMAQRGAQVLGIDLAERSLKVAQLHALESGQTRVEYREIAAEALAAEQPARYDVVTCMEMVEHVPDPASIVQACSQLVKPGGWVFLSTINRNPKSFLLAIVGAEYVLKMLPAGTHEYAKFIRPSELLRWCRDTGLDLRHTRGMEYNPLTRRYWLSADTSVNYLVACRKETA</sequence>
<proteinExistence type="inferred from homology"/>